<proteinExistence type="evidence at transcript level"/>
<protein>
    <recommendedName>
        <fullName evidence="4">Mevalonate kinase</fullName>
        <shortName>MK</shortName>
        <ecNumber evidence="2">2.7.1.36</ecNumber>
    </recommendedName>
</protein>
<gene>
    <name type="ordered locus">At5g27450</name>
    <name type="ORF">F21A20.160</name>
</gene>
<comment type="function">
    <text evidence="2">Catalyzes the phosphorylation of mevalonate to mevalonate 5-phosphate, a key step in isoprenoid and cholesterol biosynthesis.</text>
</comment>
<comment type="catalytic activity">
    <reaction evidence="2">
        <text>(R)-mevalonate + ATP = (R)-5-phosphomevalonate + ADP + H(+)</text>
        <dbReference type="Rhea" id="RHEA:17065"/>
        <dbReference type="ChEBI" id="CHEBI:15378"/>
        <dbReference type="ChEBI" id="CHEBI:30616"/>
        <dbReference type="ChEBI" id="CHEBI:36464"/>
        <dbReference type="ChEBI" id="CHEBI:58146"/>
        <dbReference type="ChEBI" id="CHEBI:456216"/>
        <dbReference type="EC" id="2.7.1.36"/>
    </reaction>
</comment>
<comment type="cofactor">
    <cofactor evidence="1">
        <name>Mg(2+)</name>
        <dbReference type="ChEBI" id="CHEBI:18420"/>
    </cofactor>
</comment>
<comment type="activity regulation">
    <text>Its activity is inhibited in vitro by geranyl pyrophosphate (GPP) and farnesyl pyrophosphate (FPP) that bind competitively at the ATP-binding site on the enzyme.</text>
</comment>
<comment type="pathway">
    <text>Isoprenoid biosynthesis; isopentenyl diphosphate biosynthesis via mevalonate pathway; isopentenyl diphosphate from (R)-mevalonate: step 1/3.</text>
</comment>
<comment type="subcellular location">
    <subcellularLocation>
        <location evidence="3">Cytoplasm</location>
    </subcellularLocation>
</comment>
<comment type="similarity">
    <text evidence="4">Belongs to the GHMP kinase family. Mevalonate kinase subfamily.</text>
</comment>
<comment type="sequence caution" evidence="4">
    <conflict type="erroneous gene model prediction">
        <sequence resource="EMBL-CDS" id="AAD45421"/>
    </conflict>
</comment>
<dbReference type="EC" id="2.7.1.36" evidence="2"/>
<dbReference type="EMBL" id="X77793">
    <property type="protein sequence ID" value="CAA54820.1"/>
    <property type="molecule type" value="mRNA"/>
</dbReference>
<dbReference type="EMBL" id="AF141853">
    <property type="protein sequence ID" value="AAD31719.1"/>
    <property type="molecule type" value="Genomic_DNA"/>
</dbReference>
<dbReference type="EMBL" id="L77688">
    <property type="protein sequence ID" value="AAD45421.1"/>
    <property type="status" value="ALT_SEQ"/>
    <property type="molecule type" value="Genomic_DNA"/>
</dbReference>
<dbReference type="EMBL" id="AC007123">
    <property type="status" value="NOT_ANNOTATED_CDS"/>
    <property type="molecule type" value="Genomic_DNA"/>
</dbReference>
<dbReference type="EMBL" id="CP002688">
    <property type="protein sequence ID" value="AED93688.1"/>
    <property type="molecule type" value="Genomic_DNA"/>
</dbReference>
<dbReference type="EMBL" id="CP002688">
    <property type="protein sequence ID" value="AED93689.1"/>
    <property type="molecule type" value="Genomic_DNA"/>
</dbReference>
<dbReference type="EMBL" id="CP002688">
    <property type="protein sequence ID" value="AED93690.1"/>
    <property type="molecule type" value="Genomic_DNA"/>
</dbReference>
<dbReference type="EMBL" id="AY084333">
    <property type="protein sequence ID" value="AAM60916.1"/>
    <property type="molecule type" value="mRNA"/>
</dbReference>
<dbReference type="EMBL" id="AY093165">
    <property type="protein sequence ID" value="AAM13164.1"/>
    <property type="molecule type" value="mRNA"/>
</dbReference>
<dbReference type="EMBL" id="BT002104">
    <property type="protein sequence ID" value="AAN72115.1"/>
    <property type="molecule type" value="mRNA"/>
</dbReference>
<dbReference type="PIR" id="S42088">
    <property type="entry name" value="S42088"/>
</dbReference>
<dbReference type="RefSeq" id="NP_001190411.1">
    <property type="nucleotide sequence ID" value="NM_001203482.1"/>
</dbReference>
<dbReference type="RefSeq" id="NP_198097.1">
    <property type="nucleotide sequence ID" value="NM_122627.6"/>
</dbReference>
<dbReference type="RefSeq" id="NP_851084.1">
    <property type="nucleotide sequence ID" value="NM_180753.4"/>
</dbReference>
<dbReference type="SMR" id="P46086"/>
<dbReference type="FunCoup" id="P46086">
    <property type="interactions" value="2296"/>
</dbReference>
<dbReference type="STRING" id="3702.P46086"/>
<dbReference type="iPTMnet" id="P46086"/>
<dbReference type="PaxDb" id="3702-AT5G27450.2"/>
<dbReference type="ProteomicsDB" id="237085"/>
<dbReference type="EnsemblPlants" id="AT5G27450.1">
    <property type="protein sequence ID" value="AT5G27450.1"/>
    <property type="gene ID" value="AT5G27450"/>
</dbReference>
<dbReference type="EnsemblPlants" id="AT5G27450.2">
    <property type="protein sequence ID" value="AT5G27450.2"/>
    <property type="gene ID" value="AT5G27450"/>
</dbReference>
<dbReference type="EnsemblPlants" id="AT5G27450.3">
    <property type="protein sequence ID" value="AT5G27450.3"/>
    <property type="gene ID" value="AT5G27450"/>
</dbReference>
<dbReference type="GeneID" id="832804"/>
<dbReference type="Gramene" id="AT5G27450.1">
    <property type="protein sequence ID" value="AT5G27450.1"/>
    <property type="gene ID" value="AT5G27450"/>
</dbReference>
<dbReference type="Gramene" id="AT5G27450.2">
    <property type="protein sequence ID" value="AT5G27450.2"/>
    <property type="gene ID" value="AT5G27450"/>
</dbReference>
<dbReference type="Gramene" id="AT5G27450.3">
    <property type="protein sequence ID" value="AT5G27450.3"/>
    <property type="gene ID" value="AT5G27450"/>
</dbReference>
<dbReference type="KEGG" id="ath:AT5G27450"/>
<dbReference type="Araport" id="AT5G27450"/>
<dbReference type="TAIR" id="AT5G27450">
    <property type="gene designation" value="MK"/>
</dbReference>
<dbReference type="eggNOG" id="KOG1511">
    <property type="taxonomic scope" value="Eukaryota"/>
</dbReference>
<dbReference type="HOGENOM" id="CLU_017814_0_1_1"/>
<dbReference type="InParanoid" id="P46086"/>
<dbReference type="OMA" id="LMDFNHG"/>
<dbReference type="OrthoDB" id="1652964at2759"/>
<dbReference type="PhylomeDB" id="P46086"/>
<dbReference type="BioCyc" id="MetaCyc:AT5G27450-MONOMER"/>
<dbReference type="UniPathway" id="UPA00057">
    <property type="reaction ID" value="UER00098"/>
</dbReference>
<dbReference type="PRO" id="PR:P46086"/>
<dbReference type="Proteomes" id="UP000006548">
    <property type="component" value="Chromosome 5"/>
</dbReference>
<dbReference type="ExpressionAtlas" id="P46086">
    <property type="expression patterns" value="baseline and differential"/>
</dbReference>
<dbReference type="GO" id="GO:0005737">
    <property type="term" value="C:cytoplasm"/>
    <property type="evidence" value="ECO:0000314"/>
    <property type="project" value="UniProtKB"/>
</dbReference>
<dbReference type="GO" id="GO:0005829">
    <property type="term" value="C:cytosol"/>
    <property type="evidence" value="ECO:0007005"/>
    <property type="project" value="TAIR"/>
</dbReference>
<dbReference type="GO" id="GO:0005524">
    <property type="term" value="F:ATP binding"/>
    <property type="evidence" value="ECO:0000250"/>
    <property type="project" value="UniProtKB"/>
</dbReference>
<dbReference type="GO" id="GO:0000287">
    <property type="term" value="F:magnesium ion binding"/>
    <property type="evidence" value="ECO:0000250"/>
    <property type="project" value="UniProtKB"/>
</dbReference>
<dbReference type="GO" id="GO:0004496">
    <property type="term" value="F:mevalonate kinase activity"/>
    <property type="evidence" value="ECO:0000250"/>
    <property type="project" value="UniProtKB"/>
</dbReference>
<dbReference type="GO" id="GO:0019287">
    <property type="term" value="P:isopentenyl diphosphate biosynthetic process, mevalonate pathway"/>
    <property type="evidence" value="ECO:0007669"/>
    <property type="project" value="UniProtKB-UniPathway"/>
</dbReference>
<dbReference type="GO" id="GO:0016126">
    <property type="term" value="P:sterol biosynthetic process"/>
    <property type="evidence" value="ECO:0007669"/>
    <property type="project" value="UniProtKB-KW"/>
</dbReference>
<dbReference type="FunFam" id="3.30.230.10:FF:000027">
    <property type="entry name" value="Mevalonate kinase"/>
    <property type="match status" value="1"/>
</dbReference>
<dbReference type="FunFam" id="3.30.70.890:FF:000003">
    <property type="entry name" value="Mevalonate kinase"/>
    <property type="match status" value="1"/>
</dbReference>
<dbReference type="Gene3D" id="3.30.230.10">
    <property type="match status" value="1"/>
</dbReference>
<dbReference type="Gene3D" id="3.30.70.890">
    <property type="entry name" value="GHMP kinase, C-terminal domain"/>
    <property type="match status" value="1"/>
</dbReference>
<dbReference type="InterPro" id="IPR013750">
    <property type="entry name" value="GHMP_kinase_C_dom"/>
</dbReference>
<dbReference type="InterPro" id="IPR036554">
    <property type="entry name" value="GHMP_kinase_C_sf"/>
</dbReference>
<dbReference type="InterPro" id="IPR006204">
    <property type="entry name" value="GHMP_kinase_N_dom"/>
</dbReference>
<dbReference type="InterPro" id="IPR006203">
    <property type="entry name" value="GHMP_knse_ATP-bd_CS"/>
</dbReference>
<dbReference type="InterPro" id="IPR006205">
    <property type="entry name" value="Mev_gal_kin"/>
</dbReference>
<dbReference type="InterPro" id="IPR020568">
    <property type="entry name" value="Ribosomal_Su5_D2-typ_SF"/>
</dbReference>
<dbReference type="InterPro" id="IPR014721">
    <property type="entry name" value="Ribsml_uS5_D2-typ_fold_subgr"/>
</dbReference>
<dbReference type="NCBIfam" id="TIGR00549">
    <property type="entry name" value="mevalon_kin"/>
    <property type="match status" value="1"/>
</dbReference>
<dbReference type="PANTHER" id="PTHR43290">
    <property type="entry name" value="MEVALONATE KINASE"/>
    <property type="match status" value="1"/>
</dbReference>
<dbReference type="PANTHER" id="PTHR43290:SF2">
    <property type="entry name" value="MEVALONATE KINASE"/>
    <property type="match status" value="1"/>
</dbReference>
<dbReference type="Pfam" id="PF08544">
    <property type="entry name" value="GHMP_kinases_C"/>
    <property type="match status" value="1"/>
</dbReference>
<dbReference type="Pfam" id="PF00288">
    <property type="entry name" value="GHMP_kinases_N"/>
    <property type="match status" value="1"/>
</dbReference>
<dbReference type="PRINTS" id="PR00959">
    <property type="entry name" value="MEVGALKINASE"/>
</dbReference>
<dbReference type="SUPFAM" id="SSF55060">
    <property type="entry name" value="GHMP Kinase, C-terminal domain"/>
    <property type="match status" value="1"/>
</dbReference>
<dbReference type="SUPFAM" id="SSF54211">
    <property type="entry name" value="Ribosomal protein S5 domain 2-like"/>
    <property type="match status" value="1"/>
</dbReference>
<dbReference type="PROSITE" id="PS00627">
    <property type="entry name" value="GHMP_KINASES_ATP"/>
    <property type="match status" value="1"/>
</dbReference>
<name>KIME_ARATH</name>
<feature type="chain" id="PRO_0000156660" description="Mevalonate kinase">
    <location>
        <begin position="1"/>
        <end position="378"/>
    </location>
</feature>
<feature type="active site" description="Proton acceptor" evidence="2">
    <location>
        <position position="204"/>
    </location>
</feature>
<feature type="binding site" evidence="1">
    <location>
        <position position="10"/>
    </location>
    <ligand>
        <name>ATP</name>
        <dbReference type="ChEBI" id="CHEBI:30616"/>
    </ligand>
</feature>
<feature type="binding site" evidence="1">
    <location>
        <position position="138"/>
    </location>
    <ligand>
        <name>ATP</name>
        <dbReference type="ChEBI" id="CHEBI:30616"/>
    </ligand>
</feature>
<feature type="binding site" evidence="1">
    <location>
        <begin position="143"/>
        <end position="149"/>
    </location>
    <ligand>
        <name>ATP</name>
        <dbReference type="ChEBI" id="CHEBI:30616"/>
    </ligand>
</feature>
<feature type="binding site" evidence="1">
    <location>
        <position position="149"/>
    </location>
    <ligand>
        <name>Mg(2+)</name>
        <dbReference type="ChEBI" id="CHEBI:18420"/>
    </ligand>
</feature>
<feature type="binding site" evidence="1">
    <location>
        <position position="193"/>
    </location>
    <ligand>
        <name>Mg(2+)</name>
        <dbReference type="ChEBI" id="CHEBI:18420"/>
    </ligand>
</feature>
<organism>
    <name type="scientific">Arabidopsis thaliana</name>
    <name type="common">Mouse-ear cress</name>
    <dbReference type="NCBI Taxonomy" id="3702"/>
    <lineage>
        <taxon>Eukaryota</taxon>
        <taxon>Viridiplantae</taxon>
        <taxon>Streptophyta</taxon>
        <taxon>Embryophyta</taxon>
        <taxon>Tracheophyta</taxon>
        <taxon>Spermatophyta</taxon>
        <taxon>Magnoliopsida</taxon>
        <taxon>eudicotyledons</taxon>
        <taxon>Gunneridae</taxon>
        <taxon>Pentapetalae</taxon>
        <taxon>rosids</taxon>
        <taxon>malvids</taxon>
        <taxon>Brassicales</taxon>
        <taxon>Brassicaceae</taxon>
        <taxon>Camelineae</taxon>
        <taxon>Arabidopsis</taxon>
    </lineage>
</organism>
<keyword id="KW-0067">ATP-binding</keyword>
<keyword id="KW-0963">Cytoplasm</keyword>
<keyword id="KW-0418">Kinase</keyword>
<keyword id="KW-0444">Lipid biosynthesis</keyword>
<keyword id="KW-0443">Lipid metabolism</keyword>
<keyword id="KW-0460">Magnesium</keyword>
<keyword id="KW-0479">Metal-binding</keyword>
<keyword id="KW-0547">Nucleotide-binding</keyword>
<keyword id="KW-1185">Reference proteome</keyword>
<keyword id="KW-0752">Steroid biosynthesis</keyword>
<keyword id="KW-0753">Steroid metabolism</keyword>
<keyword id="KW-0756">Sterol biosynthesis</keyword>
<keyword id="KW-1207">Sterol metabolism</keyword>
<keyword id="KW-0808">Transferase</keyword>
<evidence type="ECO:0000250" key="1">
    <source>
        <dbReference type="UniProtKB" id="P17256"/>
    </source>
</evidence>
<evidence type="ECO:0000250" key="2">
    <source>
        <dbReference type="UniProtKB" id="Q03426"/>
    </source>
</evidence>
<evidence type="ECO:0000269" key="3">
    <source>
    </source>
</evidence>
<evidence type="ECO:0000305" key="4"/>
<accession>P46086</accession>
<accession>Q9STB1</accession>
<reference key="1">
    <citation type="journal article" date="1994" name="Gene">
        <title>Isolation and characterization of a cDNA encoding Arabidopsis thaliana mevalonate kinase by genetic complementation in yeast.</title>
        <authorList>
            <person name="Riou C."/>
            <person name="Tourte Y."/>
            <person name="Lacroute F."/>
            <person name="Karst F."/>
        </authorList>
    </citation>
    <scope>NUCLEOTIDE SEQUENCE [MRNA]</scope>
    <source>
        <strain>cv. Landsberg erecta</strain>
        <tissue>Leaf</tissue>
    </source>
</reference>
<reference key="2">
    <citation type="journal article" date="2000" name="Plant Mol. Biol.">
        <title>Molecular cloning and expression analysis of the mevalonate kinase gene from Arabidopsis thaliana.</title>
        <authorList>
            <person name="Lluch M.A."/>
            <person name="Masferrer A."/>
            <person name="Arro M."/>
            <person name="Boronat A."/>
            <person name="Ferrer A."/>
        </authorList>
    </citation>
    <scope>NUCLEOTIDE SEQUENCE [GENOMIC DNA]</scope>
</reference>
<reference key="3">
    <citation type="journal article" date="2000" name="Nature">
        <title>Sequence and analysis of chromosome 5 of the plant Arabidopsis thaliana.</title>
        <authorList>
            <person name="Tabata S."/>
            <person name="Kaneko T."/>
            <person name="Nakamura Y."/>
            <person name="Kotani H."/>
            <person name="Kato T."/>
            <person name="Asamizu E."/>
            <person name="Miyajima N."/>
            <person name="Sasamoto S."/>
            <person name="Kimura T."/>
            <person name="Hosouchi T."/>
            <person name="Kawashima K."/>
            <person name="Kohara M."/>
            <person name="Matsumoto M."/>
            <person name="Matsuno A."/>
            <person name="Muraki A."/>
            <person name="Nakayama S."/>
            <person name="Nakazaki N."/>
            <person name="Naruo K."/>
            <person name="Okumura S."/>
            <person name="Shinpo S."/>
            <person name="Takeuchi C."/>
            <person name="Wada T."/>
            <person name="Watanabe A."/>
            <person name="Yamada M."/>
            <person name="Yasuda M."/>
            <person name="Sato S."/>
            <person name="de la Bastide M."/>
            <person name="Huang E."/>
            <person name="Spiegel L."/>
            <person name="Gnoj L."/>
            <person name="O'Shaughnessy A."/>
            <person name="Preston R."/>
            <person name="Habermann K."/>
            <person name="Murray J."/>
            <person name="Johnson D."/>
            <person name="Rohlfing T."/>
            <person name="Nelson J."/>
            <person name="Stoneking T."/>
            <person name="Pepin K."/>
            <person name="Spieth J."/>
            <person name="Sekhon M."/>
            <person name="Armstrong J."/>
            <person name="Becker M."/>
            <person name="Belter E."/>
            <person name="Cordum H."/>
            <person name="Cordes M."/>
            <person name="Courtney L."/>
            <person name="Courtney W."/>
            <person name="Dante M."/>
            <person name="Du H."/>
            <person name="Edwards J."/>
            <person name="Fryman J."/>
            <person name="Haakensen B."/>
            <person name="Lamar E."/>
            <person name="Latreille P."/>
            <person name="Leonard S."/>
            <person name="Meyer R."/>
            <person name="Mulvaney E."/>
            <person name="Ozersky P."/>
            <person name="Riley A."/>
            <person name="Strowmatt C."/>
            <person name="Wagner-McPherson C."/>
            <person name="Wollam A."/>
            <person name="Yoakum M."/>
            <person name="Bell M."/>
            <person name="Dedhia N."/>
            <person name="Parnell L."/>
            <person name="Shah R."/>
            <person name="Rodriguez M."/>
            <person name="Hoon See L."/>
            <person name="Vil D."/>
            <person name="Baker J."/>
            <person name="Kirchoff K."/>
            <person name="Toth K."/>
            <person name="King L."/>
            <person name="Bahret A."/>
            <person name="Miller B."/>
            <person name="Marra M.A."/>
            <person name="Martienssen R."/>
            <person name="McCombie W.R."/>
            <person name="Wilson R.K."/>
            <person name="Murphy G."/>
            <person name="Bancroft I."/>
            <person name="Volckaert G."/>
            <person name="Wambutt R."/>
            <person name="Duesterhoeft A."/>
            <person name="Stiekema W."/>
            <person name="Pohl T."/>
            <person name="Entian K.-D."/>
            <person name="Terryn N."/>
            <person name="Hartley N."/>
            <person name="Bent E."/>
            <person name="Johnson S."/>
            <person name="Langham S.-A."/>
            <person name="McCullagh B."/>
            <person name="Robben J."/>
            <person name="Grymonprez B."/>
            <person name="Zimmermann W."/>
            <person name="Ramsperger U."/>
            <person name="Wedler H."/>
            <person name="Balke K."/>
            <person name="Wedler E."/>
            <person name="Peters S."/>
            <person name="van Staveren M."/>
            <person name="Dirkse W."/>
            <person name="Mooijman P."/>
            <person name="Klein Lankhorst R."/>
            <person name="Weitzenegger T."/>
            <person name="Bothe G."/>
            <person name="Rose M."/>
            <person name="Hauf J."/>
            <person name="Berneiser S."/>
            <person name="Hempel S."/>
            <person name="Feldpausch M."/>
            <person name="Lamberth S."/>
            <person name="Villarroel R."/>
            <person name="Gielen J."/>
            <person name="Ardiles W."/>
            <person name="Bents O."/>
            <person name="Lemcke K."/>
            <person name="Kolesov G."/>
            <person name="Mayer K.F.X."/>
            <person name="Rudd S."/>
            <person name="Schoof H."/>
            <person name="Schueller C."/>
            <person name="Zaccaria P."/>
            <person name="Mewes H.-W."/>
            <person name="Bevan M."/>
            <person name="Fransz P.F."/>
        </authorList>
    </citation>
    <scope>NUCLEOTIDE SEQUENCE [LARGE SCALE GENOMIC DNA]</scope>
    <source>
        <strain>cv. Columbia</strain>
    </source>
</reference>
<reference key="4">
    <citation type="journal article" date="2017" name="Plant J.">
        <title>Araport11: a complete reannotation of the Arabidopsis thaliana reference genome.</title>
        <authorList>
            <person name="Cheng C.Y."/>
            <person name="Krishnakumar V."/>
            <person name="Chan A.P."/>
            <person name="Thibaud-Nissen F."/>
            <person name="Schobel S."/>
            <person name="Town C.D."/>
        </authorList>
    </citation>
    <scope>GENOME REANNOTATION</scope>
    <source>
        <strain>cv. Columbia</strain>
    </source>
</reference>
<reference key="5">
    <citation type="journal article" date="2003" name="Science">
        <title>Empirical analysis of transcriptional activity in the Arabidopsis genome.</title>
        <authorList>
            <person name="Yamada K."/>
            <person name="Lim J."/>
            <person name="Dale J.M."/>
            <person name="Chen H."/>
            <person name="Shinn P."/>
            <person name="Palm C.J."/>
            <person name="Southwick A.M."/>
            <person name="Wu H.C."/>
            <person name="Kim C.J."/>
            <person name="Nguyen M."/>
            <person name="Pham P.K."/>
            <person name="Cheuk R.F."/>
            <person name="Karlin-Newmann G."/>
            <person name="Liu S.X."/>
            <person name="Lam B."/>
            <person name="Sakano H."/>
            <person name="Wu T."/>
            <person name="Yu G."/>
            <person name="Miranda M."/>
            <person name="Quach H.L."/>
            <person name="Tripp M."/>
            <person name="Chang C.H."/>
            <person name="Lee J.M."/>
            <person name="Toriumi M.J."/>
            <person name="Chan M.M."/>
            <person name="Tang C.C."/>
            <person name="Onodera C.S."/>
            <person name="Deng J.M."/>
            <person name="Akiyama K."/>
            <person name="Ansari Y."/>
            <person name="Arakawa T."/>
            <person name="Banh J."/>
            <person name="Banno F."/>
            <person name="Bowser L."/>
            <person name="Brooks S.Y."/>
            <person name="Carninci P."/>
            <person name="Chao Q."/>
            <person name="Choy N."/>
            <person name="Enju A."/>
            <person name="Goldsmith A.D."/>
            <person name="Gurjal M."/>
            <person name="Hansen N.F."/>
            <person name="Hayashizaki Y."/>
            <person name="Johnson-Hopson C."/>
            <person name="Hsuan V.W."/>
            <person name="Iida K."/>
            <person name="Karnes M."/>
            <person name="Khan S."/>
            <person name="Koesema E."/>
            <person name="Ishida J."/>
            <person name="Jiang P.X."/>
            <person name="Jones T."/>
            <person name="Kawai J."/>
            <person name="Kamiya A."/>
            <person name="Meyers C."/>
            <person name="Nakajima M."/>
            <person name="Narusaka M."/>
            <person name="Seki M."/>
            <person name="Sakurai T."/>
            <person name="Satou M."/>
            <person name="Tamse R."/>
            <person name="Vaysberg M."/>
            <person name="Wallender E.K."/>
            <person name="Wong C."/>
            <person name="Yamamura Y."/>
            <person name="Yuan S."/>
            <person name="Shinozaki K."/>
            <person name="Davis R.W."/>
            <person name="Theologis A."/>
            <person name="Ecker J.R."/>
        </authorList>
    </citation>
    <scope>NUCLEOTIDE SEQUENCE [LARGE SCALE MRNA]</scope>
    <source>
        <strain>cv. Columbia</strain>
    </source>
</reference>
<reference key="6">
    <citation type="submission" date="2002-03" db="EMBL/GenBank/DDBJ databases">
        <title>Full-length cDNA from Arabidopsis thaliana.</title>
        <authorList>
            <person name="Brover V.V."/>
            <person name="Troukhan M.E."/>
            <person name="Alexandrov N.A."/>
            <person name="Lu Y.-P."/>
            <person name="Flavell R.B."/>
            <person name="Feldmann K.A."/>
        </authorList>
    </citation>
    <scope>NUCLEOTIDE SEQUENCE [LARGE SCALE MRNA]</scope>
</reference>
<reference key="7">
    <citation type="journal article" date="2011" name="Planta">
        <title>Peroxisomal localisation of the final steps of the mevalonic acid pathway in planta.</title>
        <authorList>
            <person name="Simkin A.J."/>
            <person name="Guirimand G."/>
            <person name="Papon N."/>
            <person name="Courdavault V."/>
            <person name="Thabet I."/>
            <person name="Ginis O."/>
            <person name="Bouzid S."/>
            <person name="Giglioli-Guivarc'h N."/>
            <person name="Clastre M."/>
        </authorList>
    </citation>
    <scope>SUBCELLULAR LOCATION</scope>
</reference>
<sequence length="378" mass="40644">MEVKARAPGKIILAGEHAVVHGSTAVAAAIDLYTYVTLRFPLPSAENNDRLTLQLKDISLEFSWSLARIKEAIPYDSSTLCRSTPASCSEETLKSIAVLVEEQNLPKEKMWLSSGISTFLWLYTRIIGFNPATVVINSELPYGSGLGSSAALCVALTAALLASSISEKTRGNGWSSLDETNLELLNKWAFEGEKIIHGKPSGIDNTVSAYGNMIKFCSGEITRLQSNMPLRMLITNTRVGRNTKALVSGVSQRAVRHPDAMKSVFNAVDSISKELAAIIQSKDETSVTEKEERIKELMEMNQGLLLSMGVSHSSIEAVILTTVKHKLVSKLTGAGGGGCVLTLLPTGTVVDKVVEELESSGFQCFTALIGGNGAQICY</sequence>